<feature type="chain" id="PRO_1000205166" description="Large ribosomal subunit protein eL43">
    <location>
        <begin position="1"/>
        <end position="86"/>
    </location>
</feature>
<feature type="zinc finger region" description="C4-type" evidence="1">
    <location>
        <begin position="38"/>
        <end position="59"/>
    </location>
</feature>
<evidence type="ECO:0000255" key="1">
    <source>
        <dbReference type="HAMAP-Rule" id="MF_00327"/>
    </source>
</evidence>
<evidence type="ECO:0000305" key="2"/>
<reference key="1">
    <citation type="journal article" date="2007" name="Genome Biol.">
        <title>Genome analysis and genome-wide proteomics of Thermococcus gammatolerans, the most radioresistant organism known amongst the Archaea.</title>
        <authorList>
            <person name="Zivanovic Y."/>
            <person name="Armengaud J."/>
            <person name="Lagorce A."/>
            <person name="Leplat C."/>
            <person name="Guerin P."/>
            <person name="Dutertre M."/>
            <person name="Anthouard V."/>
            <person name="Forterre P."/>
            <person name="Wincker P."/>
            <person name="Confalonieri F."/>
        </authorList>
    </citation>
    <scope>NUCLEOTIDE SEQUENCE [LARGE SCALE GENOMIC DNA]</scope>
    <source>
        <strain>DSM 15229 / JCM 11827 / EJ3</strain>
    </source>
</reference>
<comment type="cofactor">
    <cofactor evidence="1">
        <name>Zn(2+)</name>
        <dbReference type="ChEBI" id="CHEBI:29105"/>
    </cofactor>
    <text evidence="1">Binds 1 zinc ion per subunit.</text>
</comment>
<comment type="similarity">
    <text evidence="1">Belongs to the eukaryotic ribosomal protein eL43 family.</text>
</comment>
<gene>
    <name evidence="1" type="primary">rpl37ae</name>
    <name type="ordered locus">TGAM_0804</name>
</gene>
<sequence>MGRTVKVGSAGRFGPRYGLKIRRRVAAVEARMKQKHVCPVCGRKAVRRISTGIWQCQKCGATFAGGAYLPTTPAGKVAKRVVASKA</sequence>
<name>RL37A_THEGJ</name>
<dbReference type="EMBL" id="CP001398">
    <property type="protein sequence ID" value="ACS33306.1"/>
    <property type="molecule type" value="Genomic_DNA"/>
</dbReference>
<dbReference type="RefSeq" id="WP_015858424.1">
    <property type="nucleotide sequence ID" value="NC_012804.1"/>
</dbReference>
<dbReference type="SMR" id="C5A4Z4"/>
<dbReference type="STRING" id="593117.TGAM_0804"/>
<dbReference type="PaxDb" id="593117-TGAM_0804"/>
<dbReference type="GeneID" id="7988971"/>
<dbReference type="KEGG" id="tga:TGAM_0804"/>
<dbReference type="PATRIC" id="fig|593117.10.peg.801"/>
<dbReference type="eggNOG" id="arCOG04208">
    <property type="taxonomic scope" value="Archaea"/>
</dbReference>
<dbReference type="HOGENOM" id="CLU_141199_2_0_2"/>
<dbReference type="OrthoDB" id="372011at2157"/>
<dbReference type="Proteomes" id="UP000001488">
    <property type="component" value="Chromosome"/>
</dbReference>
<dbReference type="GO" id="GO:1990904">
    <property type="term" value="C:ribonucleoprotein complex"/>
    <property type="evidence" value="ECO:0007669"/>
    <property type="project" value="UniProtKB-KW"/>
</dbReference>
<dbReference type="GO" id="GO:0005840">
    <property type="term" value="C:ribosome"/>
    <property type="evidence" value="ECO:0007669"/>
    <property type="project" value="UniProtKB-KW"/>
</dbReference>
<dbReference type="GO" id="GO:0070180">
    <property type="term" value="F:large ribosomal subunit rRNA binding"/>
    <property type="evidence" value="ECO:0007669"/>
    <property type="project" value="UniProtKB-UniRule"/>
</dbReference>
<dbReference type="GO" id="GO:0003735">
    <property type="term" value="F:structural constituent of ribosome"/>
    <property type="evidence" value="ECO:0007669"/>
    <property type="project" value="InterPro"/>
</dbReference>
<dbReference type="GO" id="GO:0008270">
    <property type="term" value="F:zinc ion binding"/>
    <property type="evidence" value="ECO:0007669"/>
    <property type="project" value="UniProtKB-UniRule"/>
</dbReference>
<dbReference type="GO" id="GO:0006412">
    <property type="term" value="P:translation"/>
    <property type="evidence" value="ECO:0007669"/>
    <property type="project" value="UniProtKB-UniRule"/>
</dbReference>
<dbReference type="Gene3D" id="2.20.25.30">
    <property type="match status" value="1"/>
</dbReference>
<dbReference type="HAMAP" id="MF_00327">
    <property type="entry name" value="Ribosomal_eL43"/>
    <property type="match status" value="1"/>
</dbReference>
<dbReference type="InterPro" id="IPR011331">
    <property type="entry name" value="Ribosomal_eL37/eL43"/>
</dbReference>
<dbReference type="InterPro" id="IPR002674">
    <property type="entry name" value="Ribosomal_eL43"/>
</dbReference>
<dbReference type="InterPro" id="IPR050522">
    <property type="entry name" value="Ribosomal_protein_eL43"/>
</dbReference>
<dbReference type="InterPro" id="IPR011332">
    <property type="entry name" value="Ribosomal_zn-bd"/>
</dbReference>
<dbReference type="NCBIfam" id="TIGR00280">
    <property type="entry name" value="eL43_euk_arch"/>
    <property type="match status" value="1"/>
</dbReference>
<dbReference type="NCBIfam" id="NF003058">
    <property type="entry name" value="PRK03976.1"/>
    <property type="match status" value="1"/>
</dbReference>
<dbReference type="PANTHER" id="PTHR48129">
    <property type="entry name" value="60S RIBOSOMAL PROTEIN L37A"/>
    <property type="match status" value="1"/>
</dbReference>
<dbReference type="PANTHER" id="PTHR48129:SF1">
    <property type="entry name" value="LARGE RIBOSOMAL SUBUNIT PROTEIN EL43"/>
    <property type="match status" value="1"/>
</dbReference>
<dbReference type="Pfam" id="PF01780">
    <property type="entry name" value="Ribosomal_L37ae"/>
    <property type="match status" value="1"/>
</dbReference>
<dbReference type="SUPFAM" id="SSF57829">
    <property type="entry name" value="Zn-binding ribosomal proteins"/>
    <property type="match status" value="1"/>
</dbReference>
<protein>
    <recommendedName>
        <fullName evidence="1">Large ribosomal subunit protein eL43</fullName>
    </recommendedName>
    <alternativeName>
        <fullName evidence="2">50S ribosomal protein L37Ae</fullName>
    </alternativeName>
    <alternativeName>
        <fullName evidence="1">Ribosomal protein L43e</fullName>
    </alternativeName>
</protein>
<accession>C5A4Z4</accession>
<proteinExistence type="inferred from homology"/>
<keyword id="KW-0479">Metal-binding</keyword>
<keyword id="KW-1185">Reference proteome</keyword>
<keyword id="KW-0687">Ribonucleoprotein</keyword>
<keyword id="KW-0689">Ribosomal protein</keyword>
<keyword id="KW-0694">RNA-binding</keyword>
<keyword id="KW-0862">Zinc</keyword>
<keyword id="KW-0863">Zinc-finger</keyword>
<organism>
    <name type="scientific">Thermococcus gammatolerans (strain DSM 15229 / JCM 11827 / EJ3)</name>
    <dbReference type="NCBI Taxonomy" id="593117"/>
    <lineage>
        <taxon>Archaea</taxon>
        <taxon>Methanobacteriati</taxon>
        <taxon>Methanobacteriota</taxon>
        <taxon>Thermococci</taxon>
        <taxon>Thermococcales</taxon>
        <taxon>Thermococcaceae</taxon>
        <taxon>Thermococcus</taxon>
    </lineage>
</organism>